<accession>Q2IJ66</accession>
<proteinExistence type="inferred from homology"/>
<organism>
    <name type="scientific">Anaeromyxobacter dehalogenans (strain 2CP-C)</name>
    <dbReference type="NCBI Taxonomy" id="290397"/>
    <lineage>
        <taxon>Bacteria</taxon>
        <taxon>Pseudomonadati</taxon>
        <taxon>Myxococcota</taxon>
        <taxon>Myxococcia</taxon>
        <taxon>Myxococcales</taxon>
        <taxon>Cystobacterineae</taxon>
        <taxon>Anaeromyxobacteraceae</taxon>
        <taxon>Anaeromyxobacter</taxon>
    </lineage>
</organism>
<comment type="function">
    <text evidence="1">With S4 and S12 plays an important role in translational accuracy.</text>
</comment>
<comment type="function">
    <text evidence="1">Located at the back of the 30S subunit body where it stabilizes the conformation of the head with respect to the body.</text>
</comment>
<comment type="subunit">
    <text evidence="1">Part of the 30S ribosomal subunit. Contacts proteins S4 and S8.</text>
</comment>
<comment type="domain">
    <text>The N-terminal domain interacts with the head of the 30S subunit; the C-terminal domain interacts with the body and contacts protein S4. The interaction surface between S4 and S5 is involved in control of translational fidelity.</text>
</comment>
<comment type="similarity">
    <text evidence="1">Belongs to the universal ribosomal protein uS5 family.</text>
</comment>
<sequence>MATTPINANELELQDRVVHINRVAKVVKGGRRFSFSALVVVGDGAGHVGVGLGKANEVPEAIRKGGDQAKKNLFRVPLVGTTIPHEVLGHFGSGRVLLKPAGEGTGVIAGGAVRAVLEAAGVRNVLTKSQGSRNPHNVLKATVAGLKRLRSVEDSARLRGKQAAEITGA</sequence>
<dbReference type="EMBL" id="CP000251">
    <property type="protein sequence ID" value="ABC81700.1"/>
    <property type="molecule type" value="Genomic_DNA"/>
</dbReference>
<dbReference type="RefSeq" id="WP_011420983.1">
    <property type="nucleotide sequence ID" value="NC_007760.1"/>
</dbReference>
<dbReference type="SMR" id="Q2IJ66"/>
<dbReference type="STRING" id="290397.Adeh_1929"/>
<dbReference type="KEGG" id="ade:Adeh_1929"/>
<dbReference type="eggNOG" id="COG0098">
    <property type="taxonomic scope" value="Bacteria"/>
</dbReference>
<dbReference type="HOGENOM" id="CLU_065898_2_2_7"/>
<dbReference type="OrthoDB" id="9809045at2"/>
<dbReference type="Proteomes" id="UP000001935">
    <property type="component" value="Chromosome"/>
</dbReference>
<dbReference type="GO" id="GO:0015935">
    <property type="term" value="C:small ribosomal subunit"/>
    <property type="evidence" value="ECO:0007669"/>
    <property type="project" value="InterPro"/>
</dbReference>
<dbReference type="GO" id="GO:0019843">
    <property type="term" value="F:rRNA binding"/>
    <property type="evidence" value="ECO:0007669"/>
    <property type="project" value="UniProtKB-UniRule"/>
</dbReference>
<dbReference type="GO" id="GO:0003735">
    <property type="term" value="F:structural constituent of ribosome"/>
    <property type="evidence" value="ECO:0007669"/>
    <property type="project" value="InterPro"/>
</dbReference>
<dbReference type="GO" id="GO:0006412">
    <property type="term" value="P:translation"/>
    <property type="evidence" value="ECO:0007669"/>
    <property type="project" value="UniProtKB-UniRule"/>
</dbReference>
<dbReference type="FunFam" id="3.30.160.20:FF:000001">
    <property type="entry name" value="30S ribosomal protein S5"/>
    <property type="match status" value="1"/>
</dbReference>
<dbReference type="FunFam" id="3.30.230.10:FF:000002">
    <property type="entry name" value="30S ribosomal protein S5"/>
    <property type="match status" value="1"/>
</dbReference>
<dbReference type="Gene3D" id="3.30.160.20">
    <property type="match status" value="1"/>
</dbReference>
<dbReference type="Gene3D" id="3.30.230.10">
    <property type="match status" value="1"/>
</dbReference>
<dbReference type="HAMAP" id="MF_01307_B">
    <property type="entry name" value="Ribosomal_uS5_B"/>
    <property type="match status" value="1"/>
</dbReference>
<dbReference type="InterPro" id="IPR020568">
    <property type="entry name" value="Ribosomal_Su5_D2-typ_SF"/>
</dbReference>
<dbReference type="InterPro" id="IPR000851">
    <property type="entry name" value="Ribosomal_uS5"/>
</dbReference>
<dbReference type="InterPro" id="IPR005712">
    <property type="entry name" value="Ribosomal_uS5_bac-type"/>
</dbReference>
<dbReference type="InterPro" id="IPR005324">
    <property type="entry name" value="Ribosomal_uS5_C"/>
</dbReference>
<dbReference type="InterPro" id="IPR013810">
    <property type="entry name" value="Ribosomal_uS5_N"/>
</dbReference>
<dbReference type="InterPro" id="IPR018192">
    <property type="entry name" value="Ribosomal_uS5_N_CS"/>
</dbReference>
<dbReference type="InterPro" id="IPR014721">
    <property type="entry name" value="Ribsml_uS5_D2-typ_fold_subgr"/>
</dbReference>
<dbReference type="NCBIfam" id="TIGR01021">
    <property type="entry name" value="rpsE_bact"/>
    <property type="match status" value="1"/>
</dbReference>
<dbReference type="PANTHER" id="PTHR48277">
    <property type="entry name" value="MITOCHONDRIAL RIBOSOMAL PROTEIN S5"/>
    <property type="match status" value="1"/>
</dbReference>
<dbReference type="PANTHER" id="PTHR48277:SF1">
    <property type="entry name" value="MITOCHONDRIAL RIBOSOMAL PROTEIN S5"/>
    <property type="match status" value="1"/>
</dbReference>
<dbReference type="Pfam" id="PF00333">
    <property type="entry name" value="Ribosomal_S5"/>
    <property type="match status" value="1"/>
</dbReference>
<dbReference type="Pfam" id="PF03719">
    <property type="entry name" value="Ribosomal_S5_C"/>
    <property type="match status" value="1"/>
</dbReference>
<dbReference type="SUPFAM" id="SSF54768">
    <property type="entry name" value="dsRNA-binding domain-like"/>
    <property type="match status" value="1"/>
</dbReference>
<dbReference type="SUPFAM" id="SSF54211">
    <property type="entry name" value="Ribosomal protein S5 domain 2-like"/>
    <property type="match status" value="1"/>
</dbReference>
<dbReference type="PROSITE" id="PS00585">
    <property type="entry name" value="RIBOSOMAL_S5"/>
    <property type="match status" value="1"/>
</dbReference>
<dbReference type="PROSITE" id="PS50881">
    <property type="entry name" value="S5_DSRBD"/>
    <property type="match status" value="1"/>
</dbReference>
<name>RS5_ANADE</name>
<feature type="chain" id="PRO_0000323062" description="Small ribosomal subunit protein uS5">
    <location>
        <begin position="1"/>
        <end position="169"/>
    </location>
</feature>
<feature type="domain" description="S5 DRBM" evidence="1">
    <location>
        <begin position="13"/>
        <end position="76"/>
    </location>
</feature>
<evidence type="ECO:0000255" key="1">
    <source>
        <dbReference type="HAMAP-Rule" id="MF_01307"/>
    </source>
</evidence>
<evidence type="ECO:0000305" key="2"/>
<reference key="1">
    <citation type="submission" date="2006-01" db="EMBL/GenBank/DDBJ databases">
        <title>Complete sequence of Anaeromyxobacter dehalogenans 2CP-C.</title>
        <authorList>
            <person name="Copeland A."/>
            <person name="Lucas S."/>
            <person name="Lapidus A."/>
            <person name="Barry K."/>
            <person name="Detter J.C."/>
            <person name="Glavina T."/>
            <person name="Hammon N."/>
            <person name="Israni S."/>
            <person name="Pitluck S."/>
            <person name="Brettin T."/>
            <person name="Bruce D."/>
            <person name="Han C."/>
            <person name="Tapia R."/>
            <person name="Gilna P."/>
            <person name="Kiss H."/>
            <person name="Schmutz J."/>
            <person name="Larimer F."/>
            <person name="Land M."/>
            <person name="Kyrpides N."/>
            <person name="Anderson I."/>
            <person name="Sanford R.A."/>
            <person name="Ritalahti K.M."/>
            <person name="Thomas H.S."/>
            <person name="Kirby J.R."/>
            <person name="Zhulin I.B."/>
            <person name="Loeffler F.E."/>
            <person name="Richardson P."/>
        </authorList>
    </citation>
    <scope>NUCLEOTIDE SEQUENCE [LARGE SCALE GENOMIC DNA]</scope>
    <source>
        <strain>2CP-C</strain>
    </source>
</reference>
<gene>
    <name evidence="1" type="primary">rpsE</name>
    <name type="ordered locus">Adeh_1929</name>
</gene>
<protein>
    <recommendedName>
        <fullName evidence="1">Small ribosomal subunit protein uS5</fullName>
    </recommendedName>
    <alternativeName>
        <fullName evidence="2">30S ribosomal protein S5</fullName>
    </alternativeName>
</protein>
<keyword id="KW-1185">Reference proteome</keyword>
<keyword id="KW-0687">Ribonucleoprotein</keyword>
<keyword id="KW-0689">Ribosomal protein</keyword>
<keyword id="KW-0694">RNA-binding</keyword>
<keyword id="KW-0699">rRNA-binding</keyword>